<sequence length="233" mass="25993">MLKPSVTSAPTADMATLTVVQPLTLDRDVARAIELLEKLQESGEVPVHKLQSLKKVLQSEFCTAIREVYQYMHETITVNGCPEFRARATAKATVAAFAASEGHSHPRVVELPKTDEGLGFNVMGGKEQNSPIYISRIIPGGVAERHGGLKRGDQLLSVNGVSVEGEHHEKAVELLKAAKDSVKLVVRYTPKVLEEMEARFEKLRTARRRQQQQLLIQQQQQQQQQQPQQNHMS</sequence>
<accession>Q8JZS0</accession>
<evidence type="ECO:0000250" key="1"/>
<evidence type="ECO:0000255" key="2">
    <source>
        <dbReference type="PROSITE-ProRule" id="PRU00143"/>
    </source>
</evidence>
<evidence type="ECO:0000255" key="3">
    <source>
        <dbReference type="PROSITE-ProRule" id="PRU00365"/>
    </source>
</evidence>
<evidence type="ECO:0000256" key="4">
    <source>
        <dbReference type="SAM" id="MobiDB-lite"/>
    </source>
</evidence>
<evidence type="ECO:0000269" key="5">
    <source>
    </source>
</evidence>
<evidence type="ECO:0000269" key="6">
    <source>
    </source>
</evidence>
<evidence type="ECO:0000269" key="7">
    <source>
    </source>
</evidence>
<evidence type="ECO:0000305" key="8"/>
<name>LIN7A_MOUSE</name>
<proteinExistence type="evidence at protein level"/>
<dbReference type="EMBL" id="BY123635">
    <property type="status" value="NOT_ANNOTATED_CDS"/>
    <property type="molecule type" value="mRNA"/>
</dbReference>
<dbReference type="EMBL" id="BC029721">
    <property type="protein sequence ID" value="AAH29721.1"/>
    <property type="molecule type" value="mRNA"/>
</dbReference>
<dbReference type="CCDS" id="CCDS24160.1"/>
<dbReference type="RefSeq" id="NP_001034443.1">
    <property type="nucleotide sequence ID" value="NM_001039354.2"/>
</dbReference>
<dbReference type="SMR" id="Q8JZS0"/>
<dbReference type="BioGRID" id="223780">
    <property type="interactions" value="7"/>
</dbReference>
<dbReference type="ComplexPortal" id="CPX-7741">
    <property type="entry name" value="LIN-10-LIN-2-LIN-7 complex, LIN7A variant"/>
</dbReference>
<dbReference type="CORUM" id="Q8JZS0"/>
<dbReference type="FunCoup" id="Q8JZS0">
    <property type="interactions" value="158"/>
</dbReference>
<dbReference type="IntAct" id="Q8JZS0">
    <property type="interactions" value="3"/>
</dbReference>
<dbReference type="MINT" id="Q8JZS0"/>
<dbReference type="STRING" id="10090.ENSMUSP00000020057"/>
<dbReference type="GlyGen" id="Q8JZS0">
    <property type="glycosylation" value="2 sites, 1 O-linked glycan (2 sites)"/>
</dbReference>
<dbReference type="iPTMnet" id="Q8JZS0"/>
<dbReference type="PhosphoSitePlus" id="Q8JZS0"/>
<dbReference type="SwissPalm" id="Q8JZS0"/>
<dbReference type="jPOST" id="Q8JZS0"/>
<dbReference type="PaxDb" id="10090-ENSMUSP00000020057"/>
<dbReference type="PeptideAtlas" id="Q8JZS0"/>
<dbReference type="ProteomicsDB" id="290029"/>
<dbReference type="Antibodypedia" id="29812">
    <property type="antibodies" value="179 antibodies from 26 providers"/>
</dbReference>
<dbReference type="DNASU" id="108030"/>
<dbReference type="Ensembl" id="ENSMUST00000020057.16">
    <property type="protein sequence ID" value="ENSMUSP00000020057.9"/>
    <property type="gene ID" value="ENSMUSG00000019906.16"/>
</dbReference>
<dbReference type="GeneID" id="108030"/>
<dbReference type="KEGG" id="mmu:108030"/>
<dbReference type="UCSC" id="uc007gyy.1">
    <property type="organism name" value="mouse"/>
</dbReference>
<dbReference type="AGR" id="MGI:2135609"/>
<dbReference type="CTD" id="8825"/>
<dbReference type="MGI" id="MGI:2135609">
    <property type="gene designation" value="Lin7a"/>
</dbReference>
<dbReference type="VEuPathDB" id="HostDB:ENSMUSG00000019906"/>
<dbReference type="eggNOG" id="KOG3550">
    <property type="taxonomic scope" value="Eukaryota"/>
</dbReference>
<dbReference type="GeneTree" id="ENSGT00940000153222"/>
<dbReference type="HOGENOM" id="CLU_097962_0_0_1"/>
<dbReference type="InParanoid" id="Q8JZS0"/>
<dbReference type="OMA" id="EHETEFI"/>
<dbReference type="OrthoDB" id="10056216at2759"/>
<dbReference type="PhylomeDB" id="Q8JZS0"/>
<dbReference type="TreeFam" id="TF316850"/>
<dbReference type="Reactome" id="R-MMU-212676">
    <property type="pathway name" value="Dopamine Neurotransmitter Release Cycle"/>
</dbReference>
<dbReference type="BioGRID-ORCS" id="108030">
    <property type="hits" value="3 hits in 76 CRISPR screens"/>
</dbReference>
<dbReference type="CD-CODE" id="CE726F99">
    <property type="entry name" value="Postsynaptic density"/>
</dbReference>
<dbReference type="ChiTaRS" id="Lin7a">
    <property type="organism name" value="mouse"/>
</dbReference>
<dbReference type="PRO" id="PR:Q8JZS0"/>
<dbReference type="Proteomes" id="UP000000589">
    <property type="component" value="Chromosome 10"/>
</dbReference>
<dbReference type="RNAct" id="Q8JZS0">
    <property type="molecule type" value="protein"/>
</dbReference>
<dbReference type="Bgee" id="ENSMUSG00000019906">
    <property type="expression patterns" value="Expressed in cerebellum lobe and 140 other cell types or tissues"/>
</dbReference>
<dbReference type="ExpressionAtlas" id="Q8JZS0">
    <property type="expression patterns" value="baseline and differential"/>
</dbReference>
<dbReference type="GO" id="GO:0016323">
    <property type="term" value="C:basolateral plasma membrane"/>
    <property type="evidence" value="ECO:0000314"/>
    <property type="project" value="MGI"/>
</dbReference>
<dbReference type="GO" id="GO:0005923">
    <property type="term" value="C:bicellular tight junction"/>
    <property type="evidence" value="ECO:0007669"/>
    <property type="project" value="UniProtKB-SubCell"/>
</dbReference>
<dbReference type="GO" id="GO:0016020">
    <property type="term" value="C:membrane"/>
    <property type="evidence" value="ECO:0000314"/>
    <property type="project" value="MGI"/>
</dbReference>
<dbReference type="GO" id="GO:0098839">
    <property type="term" value="C:postsynaptic density membrane"/>
    <property type="evidence" value="ECO:0007669"/>
    <property type="project" value="UniProtKB-SubCell"/>
</dbReference>
<dbReference type="GO" id="GO:0098793">
    <property type="term" value="C:presynapse"/>
    <property type="evidence" value="ECO:0007669"/>
    <property type="project" value="GOC"/>
</dbReference>
<dbReference type="GO" id="GO:0030658">
    <property type="term" value="C:transport vesicle membrane"/>
    <property type="evidence" value="ECO:0000304"/>
    <property type="project" value="Reactome"/>
</dbReference>
<dbReference type="GO" id="GO:0097016">
    <property type="term" value="F:L27 domain binding"/>
    <property type="evidence" value="ECO:0007669"/>
    <property type="project" value="Ensembl"/>
</dbReference>
<dbReference type="GO" id="GO:0006887">
    <property type="term" value="P:exocytosis"/>
    <property type="evidence" value="ECO:0007669"/>
    <property type="project" value="UniProtKB-KW"/>
</dbReference>
<dbReference type="GO" id="GO:0048839">
    <property type="term" value="P:inner ear development"/>
    <property type="evidence" value="ECO:0000314"/>
    <property type="project" value="MGI"/>
</dbReference>
<dbReference type="GO" id="GO:0007269">
    <property type="term" value="P:neurotransmitter secretion"/>
    <property type="evidence" value="ECO:0000316"/>
    <property type="project" value="MGI"/>
</dbReference>
<dbReference type="GO" id="GO:0015031">
    <property type="term" value="P:protein transport"/>
    <property type="evidence" value="ECO:0007669"/>
    <property type="project" value="UniProtKB-KW"/>
</dbReference>
<dbReference type="GO" id="GO:0048489">
    <property type="term" value="P:synaptic vesicle transport"/>
    <property type="evidence" value="ECO:0000315"/>
    <property type="project" value="MGI"/>
</dbReference>
<dbReference type="CDD" id="cd06796">
    <property type="entry name" value="PDZ_Lin-7-like"/>
    <property type="match status" value="1"/>
</dbReference>
<dbReference type="FunFam" id="2.30.42.10:FF:000076">
    <property type="entry name" value="Protein lin-7 homolog"/>
    <property type="match status" value="1"/>
</dbReference>
<dbReference type="Gene3D" id="2.30.42.10">
    <property type="match status" value="1"/>
</dbReference>
<dbReference type="Gene3D" id="1.10.287.650">
    <property type="entry name" value="L27 domain"/>
    <property type="match status" value="1"/>
</dbReference>
<dbReference type="InterPro" id="IPR014775">
    <property type="entry name" value="L27_C"/>
</dbReference>
<dbReference type="InterPro" id="IPR004172">
    <property type="entry name" value="L27_dom"/>
</dbReference>
<dbReference type="InterPro" id="IPR036892">
    <property type="entry name" value="L27_dom_sf"/>
</dbReference>
<dbReference type="InterPro" id="IPR017365">
    <property type="entry name" value="LIN7"/>
</dbReference>
<dbReference type="InterPro" id="IPR051109">
    <property type="entry name" value="MAM_complex_regulator"/>
</dbReference>
<dbReference type="InterPro" id="IPR001478">
    <property type="entry name" value="PDZ"/>
</dbReference>
<dbReference type="InterPro" id="IPR036034">
    <property type="entry name" value="PDZ_sf"/>
</dbReference>
<dbReference type="PANTHER" id="PTHR14063">
    <property type="entry name" value="PROTEIN LIN-7 HOMOLOG"/>
    <property type="match status" value="1"/>
</dbReference>
<dbReference type="Pfam" id="PF02828">
    <property type="entry name" value="L27"/>
    <property type="match status" value="1"/>
</dbReference>
<dbReference type="Pfam" id="PF00595">
    <property type="entry name" value="PDZ"/>
    <property type="match status" value="1"/>
</dbReference>
<dbReference type="PIRSF" id="PIRSF038039">
    <property type="entry name" value="Lin-7_homologue"/>
    <property type="match status" value="1"/>
</dbReference>
<dbReference type="SMART" id="SM00569">
    <property type="entry name" value="L27"/>
    <property type="match status" value="1"/>
</dbReference>
<dbReference type="SMART" id="SM00228">
    <property type="entry name" value="PDZ"/>
    <property type="match status" value="1"/>
</dbReference>
<dbReference type="SUPFAM" id="SSF101288">
    <property type="entry name" value="L27 domain"/>
    <property type="match status" value="1"/>
</dbReference>
<dbReference type="SUPFAM" id="SSF50156">
    <property type="entry name" value="PDZ domain-like"/>
    <property type="match status" value="1"/>
</dbReference>
<dbReference type="PROSITE" id="PS51022">
    <property type="entry name" value="L27"/>
    <property type="match status" value="1"/>
</dbReference>
<dbReference type="PROSITE" id="PS50106">
    <property type="entry name" value="PDZ"/>
    <property type="match status" value="1"/>
</dbReference>
<reference key="1">
    <citation type="submission" date="2002-10" db="EMBL/GenBank/DDBJ databases">
        <authorList>
            <person name="Aizawa K."/>
            <person name="Akimura T."/>
            <person name="Arakawa T."/>
            <person name="Carninci P."/>
            <person name="Fukuda S."/>
            <person name="Hirozane T."/>
            <person name="Imotani K."/>
            <person name="Ishii Y."/>
            <person name="Itoh M."/>
            <person name="Kawai J."/>
            <person name="Konno H."/>
            <person name="Miyazaki A."/>
            <person name="Murata M."/>
            <person name="Nakamura M."/>
            <person name="Nomura K."/>
            <person name="Numazaki R."/>
            <person name="Ohno M."/>
            <person name="Sakai K."/>
            <person name="Sakazume N."/>
            <person name="Sasaki D."/>
            <person name="Sato K."/>
            <person name="Shibata K."/>
            <person name="Shiraki T."/>
            <person name="Tagami M."/>
            <person name="Waki K."/>
            <person name="Watahiki A."/>
            <person name="Muramatsu M."/>
            <person name="Hayashizaki Y."/>
        </authorList>
    </citation>
    <scope>NUCLEOTIDE SEQUENCE [MRNA] OF 1-111</scope>
    <source>
        <strain>C57BL/6J</strain>
        <tissue>Brain</tissue>
    </source>
</reference>
<reference key="2">
    <citation type="journal article" date="2004" name="Genome Res.">
        <title>The status, quality, and expansion of the NIH full-length cDNA project: the Mammalian Gene Collection (MGC).</title>
        <authorList>
            <consortium name="The MGC Project Team"/>
        </authorList>
    </citation>
    <scope>NUCLEOTIDE SEQUENCE [LARGE SCALE MRNA] OF 23-233</scope>
    <source>
        <tissue>Eye</tissue>
    </source>
</reference>
<reference key="3">
    <citation type="journal article" date="2000" name="EMBO J.">
        <title>Mammalian LIN-7 PDZ proteins associate with beta-catenin at the cell-cell junctions of epithelia and neurons.</title>
        <authorList>
            <person name="Perego C."/>
            <person name="Vanoni C."/>
            <person name="Massari S."/>
            <person name="Longhi R."/>
            <person name="Pietrini G."/>
        </authorList>
    </citation>
    <scope>INTERACTION WITH CDH1 AND CTNNB1</scope>
</reference>
<reference key="4">
    <citation type="journal article" date="2000" name="Science">
        <title>Kinesin superfamily motor protein KIF17 and mLin-10 in NMDA receptor-containing vesicle transport.</title>
        <authorList>
            <person name="Setou M."/>
            <person name="Nakagawa T."/>
            <person name="Seog D.-H."/>
            <person name="Hirokawa N."/>
        </authorList>
    </citation>
    <scope>FUNCTION</scope>
    <scope>IDENTIFICATION IN COMPLEX WITH APBA1 AND CASK</scope>
</reference>
<reference key="5">
    <citation type="journal article" date="2003" name="Neuron">
        <title>Role of beta-catenin in synaptic vesicle localization and presynaptic assembly.</title>
        <authorList>
            <person name="Bamji S.X."/>
            <person name="Shimazu K."/>
            <person name="Kimes N."/>
            <person name="Huelsken J."/>
            <person name="Birchmeier W."/>
            <person name="Lu B."/>
            <person name="Reichardt L.F."/>
        </authorList>
    </citation>
    <scope>FUNCTION IN SYNAPTIC VESICLE LOCALIZATION</scope>
</reference>
<reference key="6">
    <citation type="journal article" date="2004" name="J. Cell Sci.">
        <title>New sorting nexin (SNX27) and NHERF specifically interact with the 5-HT4a receptor splice variant: roles in receptor targeting.</title>
        <authorList>
            <person name="Joubert L."/>
            <person name="Hanson B."/>
            <person name="Barthet G."/>
            <person name="Sebben M."/>
            <person name="Claeysen S."/>
            <person name="Hong W."/>
            <person name="Marin P."/>
            <person name="Dumuis A."/>
            <person name="Bockaert J."/>
        </authorList>
    </citation>
    <scope>INTERACTION WITH HTR4</scope>
</reference>
<reference key="7">
    <citation type="journal article" date="2005" name="Am. J. Physiol.">
        <title>Differential localization of the Mammalian Lin 7 (MALS/Veli) PDZ proteins in the kidney.</title>
        <authorList>
            <person name="Olsen O."/>
            <person name="Wade J.B."/>
            <person name="Morin N."/>
            <person name="Bredt D.S."/>
            <person name="Welling P.A."/>
        </authorList>
    </citation>
    <scope>SUBCELLULAR LOCATION</scope>
    <scope>TISSUE SPECIFICITY</scope>
</reference>
<reference key="8">
    <citation type="journal article" date="2010" name="Cell">
        <title>A tissue-specific atlas of mouse protein phosphorylation and expression.</title>
        <authorList>
            <person name="Huttlin E.L."/>
            <person name="Jedrychowski M.P."/>
            <person name="Elias J.E."/>
            <person name="Goswami T."/>
            <person name="Rad R."/>
            <person name="Beausoleil S.A."/>
            <person name="Villen J."/>
            <person name="Haas W."/>
            <person name="Sowa M.E."/>
            <person name="Gygi S.P."/>
        </authorList>
    </citation>
    <scope>IDENTIFICATION BY MASS SPECTROMETRY [LARGE SCALE ANALYSIS]</scope>
    <source>
        <tissue>Brain</tissue>
        <tissue>Liver</tissue>
    </source>
</reference>
<comment type="function">
    <text evidence="5 6">Plays a role in establishing and maintaining the asymmetric distribution of channels and receptors at the plasma membrane of polarized cells. Forms membrane-associated multiprotein complexes that may regulate delivery and recycling of proteins to the correct membrane domains. The tripartite complex composed of LIN7 (LIN7A, LIN7B or LIN7C), CASK and APBA1 associates with the motor protein KIF17 to transport vesicles containing N-methyl-D-aspartate (NMDA) receptor subunit NR2B along microtubules (PubMed:10846156). This complex may have the potential to couple synaptic vesicle exocytosis to cell adhesion in brain. Ensures the proper localization of GRIN2B (subunit 2B of the NMDA receptor) to neuronal postsynaptic density and may function in localizing synaptic vesicles at synapses where it is recruited by beta-catenin and cadherin. Required to localize Kir2 channels, GABA transporter (SLC6A12) and EGFR/ERBB1, ERBB2, ERBB3 and ERBB4 to the basolateral membrane of epithelial cells.</text>
</comment>
<comment type="subunit">
    <text evidence="1 5">Forms a complex with CASK and CASKIN1 (By similarity). Component of the brain-specific heterotrimeric complex (LIN-10-LIN-2-LIN-7 complex) composed of at least APBA1, CASK, and LIN7, which associates with the motor protein KIF17 to transport vesicles along microtubules (PubMed:10846156). Can also interact with other modular proteins containing protein-protein interaction domains like PALS1, PALS2, MPP7, DLG1, DLG2 and DLG3 through its L27 domain. Interacts with DLG4, GRIN2B and MARCHF11 as well as CDH1 and CTNNB1, the channels KCNJ12/Kir2.2, KCNJ4/Kir2.3 and probably KCNJ2/Kir2.1 and SLC6A12/BGT-1 via its PDZ domain. The association of LIN7A with cadherin and beta-catenin is calcium-dependent, occurs at synaptic junctions and requires the actin cytoskeleton. Interacts with EGFR, ERBB2, ERBB3 and ERBB4 with both PDZ and KID domains. Associates with KIF17 via APBA1. Interacts with HTR4. Forms a tripartite complex composed of DLG1, MPP7 and LIN7 (LIN7A or LIN7C) (By similarity).</text>
</comment>
<comment type="subcellular location">
    <subcellularLocation>
        <location evidence="7">Cell membrane</location>
        <topology evidence="7">Peripheral membrane protein</topology>
    </subcellularLocation>
    <subcellularLocation>
        <location evidence="7">Basolateral cell membrane</location>
        <topology evidence="7">Peripheral membrane protein</topology>
    </subcellularLocation>
    <subcellularLocation>
        <location evidence="7">Cell junction</location>
    </subcellularLocation>
    <subcellularLocation>
        <location evidence="7">Postsynaptic density membrane</location>
        <topology evidence="7">Peripheral membrane protein</topology>
    </subcellularLocation>
    <subcellularLocation>
        <location evidence="7">Cell junction</location>
        <location evidence="7">Tight junction</location>
    </subcellularLocation>
    <text>Mainly basolateral in renal epithelial cells.</text>
</comment>
<comment type="tissue specificity">
    <text evidence="7">Expressed in the kidney, along the length of the nephron.</text>
</comment>
<comment type="domain">
    <text evidence="1">The kinase interacting site is required for proper delivery of ERBB2 to the basolateral membrane.</text>
</comment>
<comment type="domain">
    <text evidence="1">The PDZ domain regulates endocytosis and recycling of the receptor at the membrane.</text>
</comment>
<comment type="domain">
    <text evidence="1">The L27 domain mediates interaction with CASK and is involved in the formation of multimeric complexes and the association of LIN7 to membranes.</text>
</comment>
<comment type="similarity">
    <text evidence="8">Belongs to the lin-7 family.</text>
</comment>
<organism>
    <name type="scientific">Mus musculus</name>
    <name type="common">Mouse</name>
    <dbReference type="NCBI Taxonomy" id="10090"/>
    <lineage>
        <taxon>Eukaryota</taxon>
        <taxon>Metazoa</taxon>
        <taxon>Chordata</taxon>
        <taxon>Craniata</taxon>
        <taxon>Vertebrata</taxon>
        <taxon>Euteleostomi</taxon>
        <taxon>Mammalia</taxon>
        <taxon>Eutheria</taxon>
        <taxon>Euarchontoglires</taxon>
        <taxon>Glires</taxon>
        <taxon>Rodentia</taxon>
        <taxon>Myomorpha</taxon>
        <taxon>Muroidea</taxon>
        <taxon>Muridae</taxon>
        <taxon>Murinae</taxon>
        <taxon>Mus</taxon>
        <taxon>Mus</taxon>
    </lineage>
</organism>
<feature type="chain" id="PRO_0000189624" description="Protein lin-7 homolog A">
    <location>
        <begin position="1"/>
        <end position="233"/>
    </location>
</feature>
<feature type="domain" description="L27" evidence="3">
    <location>
        <begin position="25"/>
        <end position="80"/>
    </location>
</feature>
<feature type="domain" description="PDZ" evidence="2">
    <location>
        <begin position="108"/>
        <end position="190"/>
    </location>
</feature>
<feature type="region of interest" description="Disordered" evidence="4">
    <location>
        <begin position="214"/>
        <end position="233"/>
    </location>
</feature>
<feature type="short sequence motif" description="Kinase interacting site">
    <location>
        <begin position="14"/>
        <end position="28"/>
    </location>
</feature>
<keyword id="KW-0965">Cell junction</keyword>
<keyword id="KW-1003">Cell membrane</keyword>
<keyword id="KW-0268">Exocytosis</keyword>
<keyword id="KW-0472">Membrane</keyword>
<keyword id="KW-0628">Postsynaptic cell membrane</keyword>
<keyword id="KW-0653">Protein transport</keyword>
<keyword id="KW-1185">Reference proteome</keyword>
<keyword id="KW-0770">Synapse</keyword>
<keyword id="KW-0796">Tight junction</keyword>
<keyword id="KW-0813">Transport</keyword>
<protein>
    <recommendedName>
        <fullName>Protein lin-7 homolog A</fullName>
        <shortName>Lin-7A</shortName>
        <shortName>mLin-7</shortName>
    </recommendedName>
    <alternativeName>
        <fullName>Mammalian lin-seven protein 1</fullName>
        <shortName>MALS-1</shortName>
    </alternativeName>
    <alternativeName>
        <fullName>Vertebrate lin-7 homolog 1</fullName>
        <shortName>Veli-1</shortName>
    </alternativeName>
</protein>
<gene>
    <name type="primary">Lin7a</name>
    <name type="synonym">Mals1</name>
    <name type="synonym">Veli1</name>
</gene>